<gene>
    <name evidence="7 9" type="primary">fadD19</name>
    <name type="ordered locus">Rv3515c</name>
</gene>
<accession>P9WQ51</accession>
<accession>L0TEC7</accession>
<accession>Q6MWW5</accession>
<accession>Q7D5D8</accession>
<reference key="1">
    <citation type="journal article" date="1998" name="Nature">
        <title>Deciphering the biology of Mycobacterium tuberculosis from the complete genome sequence.</title>
        <authorList>
            <person name="Cole S.T."/>
            <person name="Brosch R."/>
            <person name="Parkhill J."/>
            <person name="Garnier T."/>
            <person name="Churcher C.M."/>
            <person name="Harris D.E."/>
            <person name="Gordon S.V."/>
            <person name="Eiglmeier K."/>
            <person name="Gas S."/>
            <person name="Barry C.E. III"/>
            <person name="Tekaia F."/>
            <person name="Badcock K."/>
            <person name="Basham D."/>
            <person name="Brown D."/>
            <person name="Chillingworth T."/>
            <person name="Connor R."/>
            <person name="Davies R.M."/>
            <person name="Devlin K."/>
            <person name="Feltwell T."/>
            <person name="Gentles S."/>
            <person name="Hamlin N."/>
            <person name="Holroyd S."/>
            <person name="Hornsby T."/>
            <person name="Jagels K."/>
            <person name="Krogh A."/>
            <person name="McLean J."/>
            <person name="Moule S."/>
            <person name="Murphy L.D."/>
            <person name="Oliver S."/>
            <person name="Osborne J."/>
            <person name="Quail M.A."/>
            <person name="Rajandream M.A."/>
            <person name="Rogers J."/>
            <person name="Rutter S."/>
            <person name="Seeger K."/>
            <person name="Skelton S."/>
            <person name="Squares S."/>
            <person name="Squares R."/>
            <person name="Sulston J.E."/>
            <person name="Taylor K."/>
            <person name="Whitehead S."/>
            <person name="Barrell B.G."/>
        </authorList>
    </citation>
    <scope>NUCLEOTIDE SEQUENCE [LARGE SCALE GENOMIC DNA]</scope>
    <source>
        <strain>ATCC 25618 / H37Rv</strain>
    </source>
</reference>
<reference key="2">
    <citation type="journal article" date="2004" name="Nature">
        <title>Enzymic activation and transfer of fatty acids as acyl-adenylates in mycobacteria.</title>
        <authorList>
            <person name="Trivedi O.A."/>
            <person name="Arora P."/>
            <person name="Sridharan V."/>
            <person name="Tickoo R."/>
            <person name="Mohanty D."/>
            <person name="Gokhale R.S."/>
        </authorList>
    </citation>
    <scope>FUNCTION</scope>
    <scope>CATALYTIC ACTIVITY</scope>
    <source>
        <strain>ATCC 25618 / H37Rv</strain>
    </source>
</reference>
<reference key="3">
    <citation type="journal article" date="2005" name="J. Am. Chem. Soc.">
        <title>Promiscuous fatty acyl CoA ligases produce acyl-CoA and acyl-SNAC precursors for polyketide biosynthesis.</title>
        <authorList>
            <person name="Arora P."/>
            <person name="Vats A."/>
            <person name="Saxena P."/>
            <person name="Mohanty D."/>
            <person name="Gokhale R.S."/>
        </authorList>
    </citation>
    <scope>FUNCTION</scope>
    <scope>CATALYTIC ACTIVITY</scope>
</reference>
<reference key="4">
    <citation type="journal article" date="2009" name="Nat. Chem. Biol.">
        <title>Mechanistic and functional insights into fatty acid activation in Mycobacterium tuberculosis.</title>
        <authorList>
            <person name="Arora P."/>
            <person name="Goyal A."/>
            <person name="Natarajan V.T."/>
            <person name="Rajakumara E."/>
            <person name="Verma P."/>
            <person name="Gupta R."/>
            <person name="Yousuf M."/>
            <person name="Trivedi O.A."/>
            <person name="Mohanty D."/>
            <person name="Tyagi A."/>
            <person name="Sankaranarayanan R."/>
            <person name="Gokhale R.S."/>
        </authorList>
    </citation>
    <scope>FUNCTION</scope>
    <scope>CATALYTIC ACTIVITY</scope>
</reference>
<reference key="5">
    <citation type="journal article" date="2011" name="Mol. Cell. Proteomics">
        <title>Proteogenomic analysis of Mycobacterium tuberculosis by high resolution mass spectrometry.</title>
        <authorList>
            <person name="Kelkar D.S."/>
            <person name="Kumar D."/>
            <person name="Kumar P."/>
            <person name="Balakrishnan L."/>
            <person name="Muthusamy B."/>
            <person name="Yadav A.K."/>
            <person name="Shrivastava P."/>
            <person name="Marimuthu A."/>
            <person name="Anand S."/>
            <person name="Sundaram H."/>
            <person name="Kingsbury R."/>
            <person name="Harsha H.C."/>
            <person name="Nair B."/>
            <person name="Prasad T.S."/>
            <person name="Chauhan D.S."/>
            <person name="Katoch K."/>
            <person name="Katoch V.M."/>
            <person name="Kumar P."/>
            <person name="Chaerkady R."/>
            <person name="Ramachandran S."/>
            <person name="Dash D."/>
            <person name="Pandey A."/>
        </authorList>
    </citation>
    <scope>IDENTIFICATION BY MASS SPECTROMETRY [LARGE SCALE ANALYSIS]</scope>
    <source>
        <strain>ATCC 25618 / H37Rv</strain>
    </source>
</reference>
<reference key="6">
    <citation type="journal article" date="2014" name="J. Bacteriol.">
        <title>Actinobacterial acyl coenzyme A synthetases involved in steroid side-chain catabolism.</title>
        <authorList>
            <person name="Casabon I."/>
            <person name="Swain K."/>
            <person name="Crowe A.M."/>
            <person name="Eltis L.D."/>
            <person name="Mohn W.W."/>
        </authorList>
    </citation>
    <scope>FUNCTION</scope>
    <scope>CATALYTIC ACTIVITY</scope>
    <scope>BIOPHYSICOCHEMICAL PROPERTIES</scope>
    <scope>SUBSTRATE SPECIFICITY</scope>
    <source>
        <strain>ATCC 25618 / H37Rv</strain>
    </source>
</reference>
<dbReference type="EC" id="6.2.1.2" evidence="3 4 5"/>
<dbReference type="EC" id="6.2.1.3" evidence="4 5"/>
<dbReference type="EC" id="6.2.1.42" evidence="6"/>
<dbReference type="EMBL" id="AL123456">
    <property type="protein sequence ID" value="CCP46337.1"/>
    <property type="molecule type" value="Genomic_DNA"/>
</dbReference>
<dbReference type="PIR" id="E70807">
    <property type="entry name" value="E70807"/>
</dbReference>
<dbReference type="RefSeq" id="WP_003901660.1">
    <property type="nucleotide sequence ID" value="NZ_KK339374.1"/>
</dbReference>
<dbReference type="RefSeq" id="YP_177983.1">
    <property type="nucleotide sequence ID" value="NC_000962.3"/>
</dbReference>
<dbReference type="SMR" id="P9WQ51"/>
<dbReference type="STRING" id="83332.Rv3515c"/>
<dbReference type="BindingDB" id="P9WQ51"/>
<dbReference type="ChEMBL" id="CHEMBL5182"/>
<dbReference type="SwissLipids" id="SLP:000000976"/>
<dbReference type="PaxDb" id="83332-Rv3515c"/>
<dbReference type="DNASU" id="888275"/>
<dbReference type="GeneID" id="888275"/>
<dbReference type="KEGG" id="mtu:Rv3515c"/>
<dbReference type="KEGG" id="mtv:RVBD_3515c"/>
<dbReference type="TubercuList" id="Rv3515c"/>
<dbReference type="eggNOG" id="COG0318">
    <property type="taxonomic scope" value="Bacteria"/>
</dbReference>
<dbReference type="InParanoid" id="P9WQ51"/>
<dbReference type="OrthoDB" id="3443462at2"/>
<dbReference type="PhylomeDB" id="P9WQ51"/>
<dbReference type="BioCyc" id="MetaCyc:G185E-7792-MONOMER"/>
<dbReference type="UniPathway" id="UPA00094"/>
<dbReference type="UniPathway" id="UPA00296"/>
<dbReference type="PRO" id="PR:P9WQ51"/>
<dbReference type="Proteomes" id="UP000001584">
    <property type="component" value="Chromosome"/>
</dbReference>
<dbReference type="GO" id="GO:0009274">
    <property type="term" value="C:peptidoglycan-based cell wall"/>
    <property type="evidence" value="ECO:0007005"/>
    <property type="project" value="MTBBASE"/>
</dbReference>
<dbReference type="GO" id="GO:0005524">
    <property type="term" value="F:ATP binding"/>
    <property type="evidence" value="ECO:0007669"/>
    <property type="project" value="UniProtKB-KW"/>
</dbReference>
<dbReference type="GO" id="GO:0102391">
    <property type="term" value="F:decanoate-CoA ligase activity"/>
    <property type="evidence" value="ECO:0007669"/>
    <property type="project" value="RHEA"/>
</dbReference>
<dbReference type="GO" id="GO:0004467">
    <property type="term" value="F:long-chain fatty acid-CoA ligase activity"/>
    <property type="evidence" value="ECO:0000314"/>
    <property type="project" value="MTBBASE"/>
</dbReference>
<dbReference type="GO" id="GO:0071766">
    <property type="term" value="P:Actinobacterium-type cell wall biogenesis"/>
    <property type="evidence" value="ECO:0000314"/>
    <property type="project" value="UniProtKB"/>
</dbReference>
<dbReference type="GO" id="GO:0008203">
    <property type="term" value="P:cholesterol metabolic process"/>
    <property type="evidence" value="ECO:0007669"/>
    <property type="project" value="UniProtKB-UniPathway"/>
</dbReference>
<dbReference type="GO" id="GO:0006633">
    <property type="term" value="P:fatty acid biosynthetic process"/>
    <property type="evidence" value="ECO:0007669"/>
    <property type="project" value="UniProtKB-UniPathway"/>
</dbReference>
<dbReference type="GO" id="GO:0008610">
    <property type="term" value="P:lipid biosynthetic process"/>
    <property type="evidence" value="ECO:0000314"/>
    <property type="project" value="UniProtKB"/>
</dbReference>
<dbReference type="CDD" id="cd05924">
    <property type="entry name" value="FACL_like_5"/>
    <property type="match status" value="1"/>
</dbReference>
<dbReference type="FunFam" id="3.40.50.12780:FF:000043">
    <property type="entry name" value="Acyl-CoA synthetase"/>
    <property type="match status" value="1"/>
</dbReference>
<dbReference type="FunFam" id="3.30.300.30:FF:000032">
    <property type="entry name" value="Fatty-acid-CoA ligase FadD19"/>
    <property type="match status" value="1"/>
</dbReference>
<dbReference type="Gene3D" id="3.30.300.30">
    <property type="match status" value="1"/>
</dbReference>
<dbReference type="Gene3D" id="3.40.50.12780">
    <property type="entry name" value="N-terminal domain of ligase-like"/>
    <property type="match status" value="1"/>
</dbReference>
<dbReference type="InterPro" id="IPR025110">
    <property type="entry name" value="AMP-bd_C"/>
</dbReference>
<dbReference type="InterPro" id="IPR045851">
    <property type="entry name" value="AMP-bd_C_sf"/>
</dbReference>
<dbReference type="InterPro" id="IPR020845">
    <property type="entry name" value="AMP-binding_CS"/>
</dbReference>
<dbReference type="InterPro" id="IPR000873">
    <property type="entry name" value="AMP-dep_synth/lig_dom"/>
</dbReference>
<dbReference type="InterPro" id="IPR042099">
    <property type="entry name" value="ANL_N_sf"/>
</dbReference>
<dbReference type="InterPro" id="IPR050237">
    <property type="entry name" value="ATP-dep_AMP-bd_enzyme"/>
</dbReference>
<dbReference type="NCBIfam" id="NF005863">
    <property type="entry name" value="PRK07798.1"/>
    <property type="match status" value="1"/>
</dbReference>
<dbReference type="PANTHER" id="PTHR43767">
    <property type="entry name" value="LONG-CHAIN-FATTY-ACID--COA LIGASE"/>
    <property type="match status" value="1"/>
</dbReference>
<dbReference type="PANTHER" id="PTHR43767:SF1">
    <property type="entry name" value="NONRIBOSOMAL PEPTIDE SYNTHASE PES1 (EUROFUNG)-RELATED"/>
    <property type="match status" value="1"/>
</dbReference>
<dbReference type="Pfam" id="PF00501">
    <property type="entry name" value="AMP-binding"/>
    <property type="match status" value="1"/>
</dbReference>
<dbReference type="Pfam" id="PF13193">
    <property type="entry name" value="AMP-binding_C"/>
    <property type="match status" value="1"/>
</dbReference>
<dbReference type="SUPFAM" id="SSF56801">
    <property type="entry name" value="Acetyl-CoA synthetase-like"/>
    <property type="match status" value="1"/>
</dbReference>
<dbReference type="PROSITE" id="PS00455">
    <property type="entry name" value="AMP_BINDING"/>
    <property type="match status" value="1"/>
</dbReference>
<proteinExistence type="evidence at protein level"/>
<name>FAC19_MYCTU</name>
<evidence type="ECO:0000250" key="1"/>
<evidence type="ECO:0000256" key="2">
    <source>
        <dbReference type="SAM" id="MobiDB-lite"/>
    </source>
</evidence>
<evidence type="ECO:0000269" key="3">
    <source>
    </source>
</evidence>
<evidence type="ECO:0000269" key="4">
    <source>
    </source>
</evidence>
<evidence type="ECO:0000269" key="5">
    <source>
    </source>
</evidence>
<evidence type="ECO:0000269" key="6">
    <source>
    </source>
</evidence>
<evidence type="ECO:0000303" key="7">
    <source>
    </source>
</evidence>
<evidence type="ECO:0000303" key="8">
    <source>
    </source>
</evidence>
<evidence type="ECO:0000303" key="9">
    <source>
    </source>
</evidence>
<evidence type="ECO:0000305" key="10"/>
<evidence type="ECO:0000305" key="11">
    <source>
    </source>
</evidence>
<evidence type="ECO:0000305" key="12">
    <source>
    </source>
</evidence>
<organism>
    <name type="scientific">Mycobacterium tuberculosis (strain ATCC 25618 / H37Rv)</name>
    <dbReference type="NCBI Taxonomy" id="83332"/>
    <lineage>
        <taxon>Bacteria</taxon>
        <taxon>Bacillati</taxon>
        <taxon>Actinomycetota</taxon>
        <taxon>Actinomycetes</taxon>
        <taxon>Mycobacteriales</taxon>
        <taxon>Mycobacteriaceae</taxon>
        <taxon>Mycobacterium</taxon>
        <taxon>Mycobacterium tuberculosis complex</taxon>
    </lineage>
</organism>
<protein>
    <recommendedName>
        <fullName evidence="7 9">Medium/long-chain-fatty-acid--CoA/3-oxocholest-4-en-26-oate--CoA ligase</fullName>
        <shortName evidence="7">FACL</shortName>
        <ecNumber evidence="3 4 5">6.2.1.2</ecNumber>
        <ecNumber evidence="4 5">6.2.1.3</ecNumber>
        <ecNumber evidence="6">6.2.1.42</ecNumber>
    </recommendedName>
    <alternativeName>
        <fullName evidence="7">Acyl-CoA synthetase</fullName>
    </alternativeName>
    <alternativeName>
        <fullName evidence="8">FACL19</fullName>
    </alternativeName>
    <alternativeName>
        <fullName evidence="9">Steroid-CoA ligase</fullName>
    </alternativeName>
    <alternativeName>
        <fullName evidence="9">Steroid-coenzyme A ligase</fullName>
    </alternativeName>
</protein>
<comment type="function">
    <text evidence="3 4 5 6">Catalyzes the activation of medium/long-chain fatty acids as acyl-coenzyme A (acyl-CoA), which are then transferred to the multifunctional polyketide synthase (PKS) type III for further chain extension (PubMed:15042094, PubMed:15984864, PubMed:19182784). Also involved in the degradation of cholesterol via the degradation of the side chains of C-24 branched-chain sterols. Catalyzes the ATP-dependent CoA thioesterification of the sterol 3-oxocholest-4-en-26-oate to yield 3-oxocholest-4-en-26-oyl-CoA. It can also use 3beta-hydroxy-5-cholesten-26-oate (PubMed:24244004).</text>
</comment>
<comment type="catalytic activity">
    <reaction evidence="3 4 5">
        <text>a medium-chain fatty acid + ATP + CoA = a medium-chain fatty acyl-CoA + AMP + diphosphate</text>
        <dbReference type="Rhea" id="RHEA:48340"/>
        <dbReference type="ChEBI" id="CHEBI:30616"/>
        <dbReference type="ChEBI" id="CHEBI:33019"/>
        <dbReference type="ChEBI" id="CHEBI:57287"/>
        <dbReference type="ChEBI" id="CHEBI:59558"/>
        <dbReference type="ChEBI" id="CHEBI:90546"/>
        <dbReference type="ChEBI" id="CHEBI:456215"/>
        <dbReference type="EC" id="6.2.1.2"/>
    </reaction>
    <physiologicalReaction direction="left-to-right" evidence="3 4 5">
        <dbReference type="Rhea" id="RHEA:48341"/>
    </physiologicalReaction>
</comment>
<comment type="catalytic activity">
    <reaction evidence="4 5">
        <text>a long-chain fatty acid + ATP + CoA = a long-chain fatty acyl-CoA + AMP + diphosphate</text>
        <dbReference type="Rhea" id="RHEA:15421"/>
        <dbReference type="ChEBI" id="CHEBI:30616"/>
        <dbReference type="ChEBI" id="CHEBI:33019"/>
        <dbReference type="ChEBI" id="CHEBI:57287"/>
        <dbReference type="ChEBI" id="CHEBI:57560"/>
        <dbReference type="ChEBI" id="CHEBI:83139"/>
        <dbReference type="ChEBI" id="CHEBI:456215"/>
        <dbReference type="EC" id="6.2.1.3"/>
    </reaction>
    <physiologicalReaction direction="left-to-right" evidence="4 5">
        <dbReference type="Rhea" id="RHEA:15422"/>
    </physiologicalReaction>
</comment>
<comment type="catalytic activity">
    <reaction evidence="6">
        <text>(25S)-3-oxocholest-4-en-26-oate + ATP + CoA = (25S)-3-oxocholest-4-en-26-oyl-CoA + AMP + diphosphate</text>
        <dbReference type="Rhea" id="RHEA:29291"/>
        <dbReference type="ChEBI" id="CHEBI:30616"/>
        <dbReference type="ChEBI" id="CHEBI:33019"/>
        <dbReference type="ChEBI" id="CHEBI:57287"/>
        <dbReference type="ChEBI" id="CHEBI:71541"/>
        <dbReference type="ChEBI" id="CHEBI:83819"/>
        <dbReference type="ChEBI" id="CHEBI:456215"/>
        <dbReference type="EC" id="6.2.1.42"/>
    </reaction>
    <physiologicalReaction direction="left-to-right" evidence="6">
        <dbReference type="Rhea" id="RHEA:29292"/>
    </physiologicalReaction>
</comment>
<comment type="catalytic activity">
    <reaction evidence="4 5">
        <text>hexanoate + ATP + CoA = hexanoyl-CoA + AMP + diphosphate</text>
        <dbReference type="Rhea" id="RHEA:43740"/>
        <dbReference type="ChEBI" id="CHEBI:17120"/>
        <dbReference type="ChEBI" id="CHEBI:30616"/>
        <dbReference type="ChEBI" id="CHEBI:33019"/>
        <dbReference type="ChEBI" id="CHEBI:57287"/>
        <dbReference type="ChEBI" id="CHEBI:62620"/>
        <dbReference type="ChEBI" id="CHEBI:456215"/>
    </reaction>
    <physiologicalReaction direction="left-to-right" evidence="4 5">
        <dbReference type="Rhea" id="RHEA:43741"/>
    </physiologicalReaction>
</comment>
<comment type="catalytic activity">
    <reaction evidence="4">
        <text>octanoate + ATP + CoA = octanoyl-CoA + AMP + diphosphate</text>
        <dbReference type="Rhea" id="RHEA:33631"/>
        <dbReference type="ChEBI" id="CHEBI:25646"/>
        <dbReference type="ChEBI" id="CHEBI:30616"/>
        <dbReference type="ChEBI" id="CHEBI:33019"/>
        <dbReference type="ChEBI" id="CHEBI:57287"/>
        <dbReference type="ChEBI" id="CHEBI:57386"/>
        <dbReference type="ChEBI" id="CHEBI:456215"/>
    </reaction>
    <physiologicalReaction direction="left-to-right" evidence="4">
        <dbReference type="Rhea" id="RHEA:33632"/>
    </physiologicalReaction>
</comment>
<comment type="catalytic activity">
    <reaction evidence="4">
        <text>decanoate + ATP + CoA = decanoyl-CoA + AMP + diphosphate</text>
        <dbReference type="Rhea" id="RHEA:33627"/>
        <dbReference type="ChEBI" id="CHEBI:27689"/>
        <dbReference type="ChEBI" id="CHEBI:30616"/>
        <dbReference type="ChEBI" id="CHEBI:33019"/>
        <dbReference type="ChEBI" id="CHEBI:57287"/>
        <dbReference type="ChEBI" id="CHEBI:61430"/>
        <dbReference type="ChEBI" id="CHEBI:456215"/>
    </reaction>
    <physiologicalReaction direction="left-to-right" evidence="4">
        <dbReference type="Rhea" id="RHEA:33628"/>
    </physiologicalReaction>
</comment>
<comment type="catalytic activity">
    <reaction evidence="3 4 5">
        <text>dodecanoate + ATP + CoA = dodecanoyl-CoA + AMP + diphosphate</text>
        <dbReference type="Rhea" id="RHEA:33623"/>
        <dbReference type="ChEBI" id="CHEBI:18262"/>
        <dbReference type="ChEBI" id="CHEBI:30616"/>
        <dbReference type="ChEBI" id="CHEBI:33019"/>
        <dbReference type="ChEBI" id="CHEBI:57287"/>
        <dbReference type="ChEBI" id="CHEBI:57375"/>
        <dbReference type="ChEBI" id="CHEBI:456215"/>
    </reaction>
    <physiologicalReaction direction="left-to-right" evidence="3 4 5">
        <dbReference type="Rhea" id="RHEA:33624"/>
    </physiologicalReaction>
</comment>
<comment type="catalytic activity">
    <reaction evidence="4">
        <text>tetradecanoate + ATP + CoA = tetradecanoyl-CoA + AMP + diphosphate</text>
        <dbReference type="Rhea" id="RHEA:33619"/>
        <dbReference type="ChEBI" id="CHEBI:30616"/>
        <dbReference type="ChEBI" id="CHEBI:30807"/>
        <dbReference type="ChEBI" id="CHEBI:33019"/>
        <dbReference type="ChEBI" id="CHEBI:57287"/>
        <dbReference type="ChEBI" id="CHEBI:57385"/>
        <dbReference type="ChEBI" id="CHEBI:456215"/>
    </reaction>
    <physiologicalReaction direction="left-to-right" evidence="4">
        <dbReference type="Rhea" id="RHEA:33620"/>
    </physiologicalReaction>
</comment>
<comment type="catalytic activity">
    <reaction evidence="4 5">
        <text>hexadecanoate + ATP + CoA = hexadecanoyl-CoA + AMP + diphosphate</text>
        <dbReference type="Rhea" id="RHEA:30751"/>
        <dbReference type="ChEBI" id="CHEBI:7896"/>
        <dbReference type="ChEBI" id="CHEBI:30616"/>
        <dbReference type="ChEBI" id="CHEBI:33019"/>
        <dbReference type="ChEBI" id="CHEBI:57287"/>
        <dbReference type="ChEBI" id="CHEBI:57379"/>
        <dbReference type="ChEBI" id="CHEBI:456215"/>
    </reaction>
    <physiologicalReaction direction="left-to-right" evidence="4 5">
        <dbReference type="Rhea" id="RHEA:30752"/>
    </physiologicalReaction>
</comment>
<comment type="catalytic activity">
    <reaction evidence="4">
        <text>octadecanoate + ATP + CoA = octadecanoyl-CoA + AMP + diphosphate</text>
        <dbReference type="Rhea" id="RHEA:33615"/>
        <dbReference type="ChEBI" id="CHEBI:25629"/>
        <dbReference type="ChEBI" id="CHEBI:30616"/>
        <dbReference type="ChEBI" id="CHEBI:33019"/>
        <dbReference type="ChEBI" id="CHEBI:57287"/>
        <dbReference type="ChEBI" id="CHEBI:57394"/>
        <dbReference type="ChEBI" id="CHEBI:456215"/>
    </reaction>
    <physiologicalReaction direction="left-to-right" evidence="4">
        <dbReference type="Rhea" id="RHEA:33616"/>
    </physiologicalReaction>
</comment>
<comment type="catalytic activity">
    <reaction evidence="4">
        <text>3-hydroxytetradecanoate + ATP + CoA = 3-hydroxytetradecanoyl-CoA + AMP + diphosphate</text>
        <dbReference type="Rhea" id="RHEA:44212"/>
        <dbReference type="ChEBI" id="CHEBI:30616"/>
        <dbReference type="ChEBI" id="CHEBI:33019"/>
        <dbReference type="ChEBI" id="CHEBI:57287"/>
        <dbReference type="ChEBI" id="CHEBI:84197"/>
        <dbReference type="ChEBI" id="CHEBI:84198"/>
        <dbReference type="ChEBI" id="CHEBI:456215"/>
    </reaction>
    <physiologicalReaction direction="left-to-right" evidence="4">
        <dbReference type="Rhea" id="RHEA:44213"/>
    </physiologicalReaction>
</comment>
<comment type="catalytic activity">
    <reaction evidence="4">
        <text>12-hydroxyoctadecanoate + ATP + CoA = 12-hydroxyoctadecanoyl-CoA + AMP + diphosphate</text>
        <dbReference type="Rhea" id="RHEA:44216"/>
        <dbReference type="ChEBI" id="CHEBI:30616"/>
        <dbReference type="ChEBI" id="CHEBI:33019"/>
        <dbReference type="ChEBI" id="CHEBI:57287"/>
        <dbReference type="ChEBI" id="CHEBI:84201"/>
        <dbReference type="ChEBI" id="CHEBI:84202"/>
        <dbReference type="ChEBI" id="CHEBI:456215"/>
    </reaction>
    <physiologicalReaction direction="left-to-right" evidence="4">
        <dbReference type="Rhea" id="RHEA:44217"/>
    </physiologicalReaction>
</comment>
<comment type="catalytic activity">
    <reaction evidence="4">
        <text>15-hydroxypentadecanoate + ATP + CoA = 15-hydroxypentadecanoyl-CoA + AMP + diphosphate</text>
        <dbReference type="Rhea" id="RHEA:44220"/>
        <dbReference type="ChEBI" id="CHEBI:30616"/>
        <dbReference type="ChEBI" id="CHEBI:33019"/>
        <dbReference type="ChEBI" id="CHEBI:57287"/>
        <dbReference type="ChEBI" id="CHEBI:84203"/>
        <dbReference type="ChEBI" id="CHEBI:84205"/>
        <dbReference type="ChEBI" id="CHEBI:456215"/>
    </reaction>
    <physiologicalReaction direction="left-to-right" evidence="4">
        <dbReference type="Rhea" id="RHEA:44221"/>
    </physiologicalReaction>
</comment>
<comment type="catalytic activity">
    <reaction evidence="4">
        <text>16-hydroxyhexadecanoate + ATP + CoA = 16-hydroxyhexadecanoyl-CoA + AMP + diphosphate</text>
        <dbReference type="Rhea" id="RHEA:44224"/>
        <dbReference type="ChEBI" id="CHEBI:30616"/>
        <dbReference type="ChEBI" id="CHEBI:33019"/>
        <dbReference type="ChEBI" id="CHEBI:55329"/>
        <dbReference type="ChEBI" id="CHEBI:57287"/>
        <dbReference type="ChEBI" id="CHEBI:84207"/>
        <dbReference type="ChEBI" id="CHEBI:456215"/>
    </reaction>
    <physiologicalReaction direction="left-to-right" evidence="4">
        <dbReference type="Rhea" id="RHEA:44225"/>
    </physiologicalReaction>
</comment>
<comment type="catalytic activity">
    <reaction evidence="4">
        <text>2-methylhexadecanoate + ATP + CoA = 2-methylhexadecanoyl-CoA + AMP + diphosphate</text>
        <dbReference type="Rhea" id="RHEA:44192"/>
        <dbReference type="ChEBI" id="CHEBI:30616"/>
        <dbReference type="ChEBI" id="CHEBI:33019"/>
        <dbReference type="ChEBI" id="CHEBI:57287"/>
        <dbReference type="ChEBI" id="CHEBI:84175"/>
        <dbReference type="ChEBI" id="CHEBI:84182"/>
        <dbReference type="ChEBI" id="CHEBI:456215"/>
    </reaction>
    <physiologicalReaction direction="left-to-right" evidence="4">
        <dbReference type="Rhea" id="RHEA:44193"/>
    </physiologicalReaction>
</comment>
<comment type="catalytic activity">
    <reaction evidence="4">
        <text>3-methylundecanoate + ATP + CoA = 3-methylundecanoyl-CoA + AMP + diphosphate</text>
        <dbReference type="Rhea" id="RHEA:44196"/>
        <dbReference type="ChEBI" id="CHEBI:30616"/>
        <dbReference type="ChEBI" id="CHEBI:33019"/>
        <dbReference type="ChEBI" id="CHEBI:57287"/>
        <dbReference type="ChEBI" id="CHEBI:84183"/>
        <dbReference type="ChEBI" id="CHEBI:84184"/>
        <dbReference type="ChEBI" id="CHEBI:456215"/>
    </reaction>
    <physiologicalReaction direction="left-to-right" evidence="4">
        <dbReference type="Rhea" id="RHEA:44197"/>
    </physiologicalReaction>
</comment>
<comment type="catalytic activity">
    <reaction evidence="4">
        <text>12-methyltridecanoate + ATP + CoA = 12-methyltridecanoyl-CoA + AMP + diphosphate</text>
        <dbReference type="Rhea" id="RHEA:44208"/>
        <dbReference type="ChEBI" id="CHEBI:30616"/>
        <dbReference type="ChEBI" id="CHEBI:33019"/>
        <dbReference type="ChEBI" id="CHEBI:57287"/>
        <dbReference type="ChEBI" id="CHEBI:84193"/>
        <dbReference type="ChEBI" id="CHEBI:84195"/>
        <dbReference type="ChEBI" id="CHEBI:456215"/>
    </reaction>
    <physiologicalReaction direction="left-to-right" evidence="4">
        <dbReference type="Rhea" id="RHEA:44209"/>
    </physiologicalReaction>
</comment>
<comment type="catalytic activity">
    <reaction evidence="4">
        <text>12-methyloctadecanoate + ATP + CoA = 12-methyloctadecanoyl-CoA + AMP + diphosphate</text>
        <dbReference type="Rhea" id="RHEA:44200"/>
        <dbReference type="ChEBI" id="CHEBI:30616"/>
        <dbReference type="ChEBI" id="CHEBI:33019"/>
        <dbReference type="ChEBI" id="CHEBI:57287"/>
        <dbReference type="ChEBI" id="CHEBI:84176"/>
        <dbReference type="ChEBI" id="CHEBI:84181"/>
        <dbReference type="ChEBI" id="CHEBI:456215"/>
    </reaction>
    <physiologicalReaction direction="left-to-right" evidence="4">
        <dbReference type="Rhea" id="RHEA:44201"/>
    </physiologicalReaction>
</comment>
<comment type="catalytic activity">
    <reaction evidence="6">
        <text>(25S)-3beta-hydroxy-5-cholestenoate + ATP + CoA = (25S)-3beta-hydroxy-5-cholestenoyl-CoA + AMP + diphosphate</text>
        <dbReference type="Rhea" id="RHEA:43880"/>
        <dbReference type="ChEBI" id="CHEBI:30616"/>
        <dbReference type="ChEBI" id="CHEBI:33019"/>
        <dbReference type="ChEBI" id="CHEBI:57287"/>
        <dbReference type="ChEBI" id="CHEBI:71567"/>
        <dbReference type="ChEBI" id="CHEBI:83783"/>
        <dbReference type="ChEBI" id="CHEBI:456215"/>
    </reaction>
    <physiologicalReaction direction="left-to-right" evidence="6">
        <dbReference type="Rhea" id="RHEA:43881"/>
    </physiologicalReaction>
</comment>
<comment type="biophysicochemical properties">
    <kinetics>
        <KM evidence="6">23 uM for 3-oxo-4-cholesten-26-oate (at pH 7.3 and 22 degrees Celsius)</KM>
        <Vmax evidence="6">2.3 umol/min/mg enzyme with 3-oxo-4-cholesten-26-oate as substrate (at pH 7.3 and 22 degrees Celsius)</Vmax>
        <text evidence="6">kcat is 0.75 sec(-1) for 3-oxo-4-cholesten-26-oate--CoA ligase activity (at pH 7.3 and 22 degrees Celsius).</text>
    </kinetics>
</comment>
<comment type="pathway">
    <text evidence="11">Lipid metabolism; fatty acid biosynthesis.</text>
</comment>
<comment type="pathway">
    <text evidence="12">Steroid metabolism; cholesterol metabolism.</text>
</comment>
<comment type="similarity">
    <text evidence="10">Belongs to the ATP-dependent AMP-binding enzyme family.</text>
</comment>
<keyword id="KW-0067">ATP-binding</keyword>
<keyword id="KW-0153">Cholesterol metabolism</keyword>
<keyword id="KW-0276">Fatty acid metabolism</keyword>
<keyword id="KW-0436">Ligase</keyword>
<keyword id="KW-0443">Lipid metabolism</keyword>
<keyword id="KW-0547">Nucleotide-binding</keyword>
<keyword id="KW-1185">Reference proteome</keyword>
<keyword id="KW-0753">Steroid metabolism</keyword>
<keyword id="KW-1207">Sterol metabolism</keyword>
<sequence length="548" mass="59741">MAVALNIADLAEHAIDAVPDRVAVICGDEQLTYAQLEDKANRLAHHLIDQGVQKDDKVGLYCRNRIEIVIAMLGIVKAGAILVNVNFRYVEGELRYLFDNSDMVALVHERRYADRVANVLPDTPHVRTILVVEDGSDQDYRRYGGVEFYSAIAAGSPERDFGERSADAIYLLYTGGTTGFPKGVMWRHEDIYRVLFGGTDFATGEFVKDEYDLAKAAAANPPMIRYPIPPMIHGATQSATWMALFSGQTTVLAPEFNADEVWRTIHKHKVNLLFFTGDAMARPLVDALVKGNDYDLSSLFLLASTAALFSPSIKEKLLELLPNRVITDSIGSSETGFGGTSVVAAGQAHGGGPRVRIDHRTVVLDDDGNEVKPGSGMRGVIAKKGNIPVGYYKDEKKTAETFRTINGVRYAIPGDYAQVEEDGTVTMLGRGSVSINSGGEKVYPEEVEAALKGHPDVFDALVVGVPDPRYGQQVAAVVQARPGCRPSLAELDSFVRSEIAGYKVPRSLWFVDEVKRSPAGKPDYRWAKEQTEARPADDVHAGHVTSGG</sequence>
<feature type="chain" id="PRO_0000406790" description="Medium/long-chain-fatty-acid--CoA/3-oxocholest-4-en-26-oate--CoA ligase">
    <location>
        <begin position="1"/>
        <end position="548"/>
    </location>
</feature>
<feature type="region of interest" description="Disordered" evidence="2">
    <location>
        <begin position="520"/>
        <end position="548"/>
    </location>
</feature>
<feature type="compositionally biased region" description="Basic and acidic residues" evidence="2">
    <location>
        <begin position="520"/>
        <end position="541"/>
    </location>
</feature>
<feature type="binding site" evidence="1">
    <location>
        <begin position="174"/>
        <end position="182"/>
    </location>
    <ligand>
        <name>ATP</name>
        <dbReference type="ChEBI" id="CHEBI:30616"/>
    </ligand>
</feature>
<feature type="binding site" evidence="1">
    <location>
        <position position="415"/>
    </location>
    <ligand>
        <name>ATP</name>
        <dbReference type="ChEBI" id="CHEBI:30616"/>
    </ligand>
</feature>
<feature type="binding site" evidence="1">
    <location>
        <position position="430"/>
    </location>
    <ligand>
        <name>ATP</name>
        <dbReference type="ChEBI" id="CHEBI:30616"/>
    </ligand>
</feature>
<feature type="binding site" evidence="1">
    <location>
        <position position="521"/>
    </location>
    <ligand>
        <name>ATP</name>
        <dbReference type="ChEBI" id="CHEBI:30616"/>
    </ligand>
</feature>